<gene>
    <name evidence="1" type="primary">rny</name>
    <name type="ordered locus">Cbei_1217</name>
</gene>
<proteinExistence type="inferred from homology"/>
<comment type="function">
    <text evidence="1">Endoribonuclease that initiates mRNA decay.</text>
</comment>
<comment type="subcellular location">
    <subcellularLocation>
        <location evidence="1">Cell membrane</location>
        <topology evidence="1">Single-pass membrane protein</topology>
    </subcellularLocation>
</comment>
<comment type="similarity">
    <text evidence="1">Belongs to the RNase Y family.</text>
</comment>
<name>RNY_CLOB8</name>
<keyword id="KW-1003">Cell membrane</keyword>
<keyword id="KW-0255">Endonuclease</keyword>
<keyword id="KW-0378">Hydrolase</keyword>
<keyword id="KW-0472">Membrane</keyword>
<keyword id="KW-0540">Nuclease</keyword>
<keyword id="KW-0694">RNA-binding</keyword>
<keyword id="KW-0812">Transmembrane</keyword>
<keyword id="KW-1133">Transmembrane helix</keyword>
<protein>
    <recommendedName>
        <fullName evidence="1">Ribonuclease Y</fullName>
        <shortName evidence="1">RNase Y</shortName>
        <ecNumber evidence="1">3.1.-.-</ecNumber>
    </recommendedName>
</protein>
<accession>A6LSR9</accession>
<feature type="chain" id="PRO_0000344844" description="Ribonuclease Y">
    <location>
        <begin position="1"/>
        <end position="513"/>
    </location>
</feature>
<feature type="transmembrane region" description="Helical" evidence="1">
    <location>
        <begin position="1"/>
        <end position="21"/>
    </location>
</feature>
<feature type="domain" description="KH" evidence="1">
    <location>
        <begin position="203"/>
        <end position="288"/>
    </location>
</feature>
<feature type="domain" description="HD" evidence="2">
    <location>
        <begin position="329"/>
        <end position="422"/>
    </location>
</feature>
<organism>
    <name type="scientific">Clostridium beijerinckii (strain ATCC 51743 / NCIMB 8052)</name>
    <name type="common">Clostridium acetobutylicum</name>
    <dbReference type="NCBI Taxonomy" id="290402"/>
    <lineage>
        <taxon>Bacteria</taxon>
        <taxon>Bacillati</taxon>
        <taxon>Bacillota</taxon>
        <taxon>Clostridia</taxon>
        <taxon>Eubacteriales</taxon>
        <taxon>Clostridiaceae</taxon>
        <taxon>Clostridium</taxon>
    </lineage>
</organism>
<reference key="1">
    <citation type="submission" date="2007-06" db="EMBL/GenBank/DDBJ databases">
        <title>Complete sequence of Clostridium beijerinckii NCIMB 8052.</title>
        <authorList>
            <consortium name="US DOE Joint Genome Institute"/>
            <person name="Copeland A."/>
            <person name="Lucas S."/>
            <person name="Lapidus A."/>
            <person name="Barry K."/>
            <person name="Detter J.C."/>
            <person name="Glavina del Rio T."/>
            <person name="Hammon N."/>
            <person name="Israni S."/>
            <person name="Dalin E."/>
            <person name="Tice H."/>
            <person name="Pitluck S."/>
            <person name="Sims D."/>
            <person name="Brettin T."/>
            <person name="Bruce D."/>
            <person name="Tapia R."/>
            <person name="Brainard J."/>
            <person name="Schmutz J."/>
            <person name="Larimer F."/>
            <person name="Land M."/>
            <person name="Hauser L."/>
            <person name="Kyrpides N."/>
            <person name="Mikhailova N."/>
            <person name="Bennet G."/>
            <person name="Cann I."/>
            <person name="Chen J.-S."/>
            <person name="Contreras A.L."/>
            <person name="Jones D."/>
            <person name="Kashket E."/>
            <person name="Mitchell W."/>
            <person name="Stoddard S."/>
            <person name="Schwarz W."/>
            <person name="Qureshi N."/>
            <person name="Young M."/>
            <person name="Shi Z."/>
            <person name="Ezeji T."/>
            <person name="White B."/>
            <person name="Blaschek H."/>
            <person name="Richardson P."/>
        </authorList>
    </citation>
    <scope>NUCLEOTIDE SEQUENCE [LARGE SCALE GENOMIC DNA]</scope>
    <source>
        <strain>ATCC 51743 / NCIMB 8052</strain>
    </source>
</reference>
<dbReference type="EC" id="3.1.-.-" evidence="1"/>
<dbReference type="EMBL" id="CP000721">
    <property type="protein sequence ID" value="ABR33399.1"/>
    <property type="molecule type" value="Genomic_DNA"/>
</dbReference>
<dbReference type="SMR" id="A6LSR9"/>
<dbReference type="KEGG" id="cbe:Cbei_1217"/>
<dbReference type="eggNOG" id="COG1418">
    <property type="taxonomic scope" value="Bacteria"/>
</dbReference>
<dbReference type="HOGENOM" id="CLU_028328_1_0_9"/>
<dbReference type="Proteomes" id="UP000000565">
    <property type="component" value="Chromosome"/>
</dbReference>
<dbReference type="GO" id="GO:0005886">
    <property type="term" value="C:plasma membrane"/>
    <property type="evidence" value="ECO:0007669"/>
    <property type="project" value="UniProtKB-SubCell"/>
</dbReference>
<dbReference type="GO" id="GO:0003723">
    <property type="term" value="F:RNA binding"/>
    <property type="evidence" value="ECO:0007669"/>
    <property type="project" value="UniProtKB-UniRule"/>
</dbReference>
<dbReference type="GO" id="GO:0004521">
    <property type="term" value="F:RNA endonuclease activity"/>
    <property type="evidence" value="ECO:0007669"/>
    <property type="project" value="UniProtKB-UniRule"/>
</dbReference>
<dbReference type="GO" id="GO:0006402">
    <property type="term" value="P:mRNA catabolic process"/>
    <property type="evidence" value="ECO:0007669"/>
    <property type="project" value="UniProtKB-UniRule"/>
</dbReference>
<dbReference type="CDD" id="cd00077">
    <property type="entry name" value="HDc"/>
    <property type="match status" value="1"/>
</dbReference>
<dbReference type="CDD" id="cd22431">
    <property type="entry name" value="KH-I_RNaseY"/>
    <property type="match status" value="1"/>
</dbReference>
<dbReference type="FunFam" id="1.10.3210.10:FF:000003">
    <property type="entry name" value="Ribonuclease Y"/>
    <property type="match status" value="1"/>
</dbReference>
<dbReference type="FunFam" id="3.30.1370.10:FF:000006">
    <property type="entry name" value="Ribonuclease Y"/>
    <property type="match status" value="1"/>
</dbReference>
<dbReference type="Gene3D" id="1.10.3210.10">
    <property type="entry name" value="Hypothetical protein af1432"/>
    <property type="match status" value="1"/>
</dbReference>
<dbReference type="Gene3D" id="3.30.1370.10">
    <property type="entry name" value="K Homology domain, type 1"/>
    <property type="match status" value="1"/>
</dbReference>
<dbReference type="HAMAP" id="MF_00335">
    <property type="entry name" value="RNase_Y"/>
    <property type="match status" value="1"/>
</dbReference>
<dbReference type="InterPro" id="IPR003607">
    <property type="entry name" value="HD/PDEase_dom"/>
</dbReference>
<dbReference type="InterPro" id="IPR006674">
    <property type="entry name" value="HD_domain"/>
</dbReference>
<dbReference type="InterPro" id="IPR006675">
    <property type="entry name" value="HDIG_dom"/>
</dbReference>
<dbReference type="InterPro" id="IPR004087">
    <property type="entry name" value="KH_dom"/>
</dbReference>
<dbReference type="InterPro" id="IPR004088">
    <property type="entry name" value="KH_dom_type_1"/>
</dbReference>
<dbReference type="InterPro" id="IPR036612">
    <property type="entry name" value="KH_dom_type_1_sf"/>
</dbReference>
<dbReference type="InterPro" id="IPR017705">
    <property type="entry name" value="Ribonuclease_Y"/>
</dbReference>
<dbReference type="InterPro" id="IPR022711">
    <property type="entry name" value="RNase_Y_N"/>
</dbReference>
<dbReference type="NCBIfam" id="TIGR00277">
    <property type="entry name" value="HDIG"/>
    <property type="match status" value="1"/>
</dbReference>
<dbReference type="NCBIfam" id="TIGR03319">
    <property type="entry name" value="RNase_Y"/>
    <property type="match status" value="1"/>
</dbReference>
<dbReference type="PANTHER" id="PTHR12826">
    <property type="entry name" value="RIBONUCLEASE Y"/>
    <property type="match status" value="1"/>
</dbReference>
<dbReference type="PANTHER" id="PTHR12826:SF15">
    <property type="entry name" value="RIBONUCLEASE Y"/>
    <property type="match status" value="1"/>
</dbReference>
<dbReference type="Pfam" id="PF01966">
    <property type="entry name" value="HD"/>
    <property type="match status" value="1"/>
</dbReference>
<dbReference type="Pfam" id="PF00013">
    <property type="entry name" value="KH_1"/>
    <property type="match status" value="1"/>
</dbReference>
<dbReference type="Pfam" id="PF12072">
    <property type="entry name" value="RNase_Y_N"/>
    <property type="match status" value="1"/>
</dbReference>
<dbReference type="SMART" id="SM00471">
    <property type="entry name" value="HDc"/>
    <property type="match status" value="1"/>
</dbReference>
<dbReference type="SMART" id="SM00322">
    <property type="entry name" value="KH"/>
    <property type="match status" value="1"/>
</dbReference>
<dbReference type="SUPFAM" id="SSF54791">
    <property type="entry name" value="Eukaryotic type KH-domain (KH-domain type I)"/>
    <property type="match status" value="1"/>
</dbReference>
<dbReference type="SUPFAM" id="SSF109604">
    <property type="entry name" value="HD-domain/PDEase-like"/>
    <property type="match status" value="1"/>
</dbReference>
<dbReference type="PROSITE" id="PS51831">
    <property type="entry name" value="HD"/>
    <property type="match status" value="1"/>
</dbReference>
<dbReference type="PROSITE" id="PS50084">
    <property type="entry name" value="KH_TYPE_1"/>
    <property type="match status" value="1"/>
</dbReference>
<evidence type="ECO:0000255" key="1">
    <source>
        <dbReference type="HAMAP-Rule" id="MF_00335"/>
    </source>
</evidence>
<evidence type="ECO:0000255" key="2">
    <source>
        <dbReference type="PROSITE-ProRule" id="PRU01175"/>
    </source>
</evidence>
<sequence>MVTAVMILIDVIVLLILGIVVYKTIQNISKAKIESLEKEAEEILVRAKKDAEATKKEAILEAKEELHKLRNDFDKESRERRNEIQRLERRVIQREEALDKKSELLEKKDETINQRMLEVDQVEARVQKLYEERRAELERISALSSEEAREILLDEIRKEITHDAALMIKDIESKAKEEADKRAREVITTAIQRCAADHVSESTVHVVALPNDEMKGRIIGREGRNIRTLETLTGVDLIIDDTPEAVILSSFDPIRREVARMALEKLIVDGRIHPARIEEMVERATKDVESSIKEEGEQAALETSVHGLHPEIIRLLGRLKYRTSYGQNVLKHSIEVSYLAGLMASELGLDVTLAKRAGLLHDIGKAVDQEQEGPHALIGGDLAKKYHESPLVINAIAAHHSDVEMQSLEAVLVQAADAISAARPGARRETLEAYIKRLEKLEEIANSHEGVEKSYAIQAGREIRIMVKPDKVDDAGTIELARNLVKSVEEELEYPGQIKINVIRETRAVDFAK</sequence>